<feature type="chain" id="PRO_0000440136" description="Small nuclear ribonucleoprotein SmD1b">
    <location>
        <begin position="1"/>
        <end position="116"/>
    </location>
</feature>
<feature type="domain" description="Sm" evidence="1">
    <location>
        <begin position="2"/>
        <end position="74"/>
    </location>
</feature>
<feature type="repeat" description="1" evidence="5">
    <location>
        <begin position="100"/>
        <end position="101"/>
    </location>
</feature>
<feature type="repeat" description="2" evidence="5">
    <location>
        <begin position="102"/>
        <end position="103"/>
    </location>
</feature>
<feature type="repeat" description="3" evidence="5">
    <location>
        <begin position="104"/>
        <end position="105"/>
    </location>
</feature>
<feature type="repeat" description="4" evidence="5">
    <location>
        <begin position="106"/>
        <end position="107"/>
    </location>
</feature>
<feature type="repeat" description="5" evidence="5">
    <location>
        <begin position="108"/>
        <end position="109"/>
    </location>
</feature>
<feature type="repeat" description="6" evidence="5">
    <location>
        <begin position="110"/>
        <end position="111"/>
    </location>
</feature>
<feature type="repeat" description="7" evidence="5">
    <location>
        <begin position="112"/>
        <end position="113"/>
    </location>
</feature>
<feature type="repeat" description="8; approximate" evidence="5">
    <location>
        <begin position="114"/>
        <end position="116"/>
    </location>
</feature>
<feature type="region of interest" description="Disordered" evidence="2">
    <location>
        <begin position="85"/>
        <end position="116"/>
    </location>
</feature>
<feature type="region of interest" description="8 X 2 AA approximate tandem repeats of G-R" evidence="5">
    <location>
        <begin position="100"/>
        <end position="116"/>
    </location>
</feature>
<feature type="compositionally biased region" description="Basic residues" evidence="2">
    <location>
        <begin position="102"/>
        <end position="116"/>
    </location>
</feature>
<feature type="splice variant" id="VSP_058955" description="In isoform 2.">
    <original>T</original>
    <variation>TDEYTRFYLNR</variation>
    <location>
        <position position="30"/>
    </location>
</feature>
<name>SMD1B_ARATH</name>
<comment type="function">
    <text evidence="3">Involved in splicing regulation. Facilitates post-transcriptional gene silencing (PTGS) by limiting the degradation of transgene aberrant RNAs by the RNA quality control (RQC) machinery, thus favoring their entry into cytoplasmic siRNA bodies where they can trigger PTGS. Does not participate in the production of small RNAs.</text>
</comment>
<comment type="subcellular location">
    <subcellularLocation>
        <location evidence="3">Nucleus speckle</location>
    </subcellularLocation>
    <subcellularLocation>
        <location evidence="3">Nucleus</location>
        <location evidence="3">Nucleolus</location>
    </subcellularLocation>
</comment>
<comment type="alternative products">
    <event type="alternative splicing"/>
    <isoform>
        <id>Q9SY09-1</id>
        <name>1</name>
        <sequence type="displayed"/>
    </isoform>
    <isoform>
        <id>Q9SY09-2</id>
        <name>2</name>
        <sequence type="described" ref="VSP_058955"/>
    </isoform>
</comment>
<comment type="disruption phenotype">
    <text evidence="3">Post-transcriptional gene silencing deficiency and developmental defects, including reduced stature, leaf serration and early flowering (PubMed:26842463). Smd1a and smd2b double mutants are embryo lethal (PubMed:26842463).</text>
</comment>
<comment type="miscellaneous">
    <text evidence="6">SMD1A and SMD1B have redundant activity, but consistent with their expression level, SMD1B is more important than SMD1A and either one copy of SMD1B or two copies of SMD1A is necessary for the plant to survive.</text>
</comment>
<comment type="similarity">
    <text evidence="5">Belongs to the snRNP core protein family.</text>
</comment>
<accession>Q9SY09</accession>
<accession>F4JHV8</accession>
<dbReference type="EMBL" id="AC004044">
    <property type="protein sequence ID" value="AAD15345.1"/>
    <property type="molecule type" value="Genomic_DNA"/>
</dbReference>
<dbReference type="EMBL" id="AL161495">
    <property type="protein sequence ID" value="CAB77769.1"/>
    <property type="molecule type" value="Genomic_DNA"/>
</dbReference>
<dbReference type="EMBL" id="CP002687">
    <property type="protein sequence ID" value="AEE82236.1"/>
    <property type="molecule type" value="Genomic_DNA"/>
</dbReference>
<dbReference type="EMBL" id="CP002687">
    <property type="protein sequence ID" value="AEE82237.1"/>
    <property type="molecule type" value="Genomic_DNA"/>
</dbReference>
<dbReference type="EMBL" id="AK117672">
    <property type="protein sequence ID" value="BAC42325.1"/>
    <property type="molecule type" value="mRNA"/>
</dbReference>
<dbReference type="EMBL" id="BT028879">
    <property type="protein sequence ID" value="ABI49426.1"/>
    <property type="molecule type" value="mRNA"/>
</dbReference>
<dbReference type="EMBL" id="AY084707">
    <property type="protein sequence ID" value="AAM61281.1"/>
    <property type="molecule type" value="mRNA"/>
</dbReference>
<dbReference type="PIR" id="B85036">
    <property type="entry name" value="B85036"/>
</dbReference>
<dbReference type="RefSeq" id="NP_001190664.1">
    <molecule id="Q9SY09-2"/>
    <property type="nucleotide sequence ID" value="NM_001203735.1"/>
</dbReference>
<dbReference type="RefSeq" id="NP_192193.1">
    <molecule id="Q9SY09-1"/>
    <property type="nucleotide sequence ID" value="NM_116518.4"/>
</dbReference>
<dbReference type="SMR" id="Q9SY09"/>
<dbReference type="FunCoup" id="Q9SY09">
    <property type="interactions" value="4063"/>
</dbReference>
<dbReference type="IntAct" id="Q9SY09">
    <property type="interactions" value="3"/>
</dbReference>
<dbReference type="STRING" id="3702.Q9SY09"/>
<dbReference type="PaxDb" id="3702-AT4G02840.2"/>
<dbReference type="ProteomicsDB" id="234530">
    <molecule id="Q9SY09-1"/>
</dbReference>
<dbReference type="EnsemblPlants" id="AT4G02840.1">
    <molecule id="Q9SY09-1"/>
    <property type="protein sequence ID" value="AT4G02840.1"/>
    <property type="gene ID" value="AT4G02840"/>
</dbReference>
<dbReference type="EnsemblPlants" id="AT4G02840.2">
    <molecule id="Q9SY09-2"/>
    <property type="protein sequence ID" value="AT4G02840.2"/>
    <property type="gene ID" value="AT4G02840"/>
</dbReference>
<dbReference type="GeneID" id="828163"/>
<dbReference type="Gramene" id="AT4G02840.1">
    <molecule id="Q9SY09-1"/>
    <property type="protein sequence ID" value="AT4G02840.1"/>
    <property type="gene ID" value="AT4G02840"/>
</dbReference>
<dbReference type="Gramene" id="AT4G02840.2">
    <molecule id="Q9SY09-2"/>
    <property type="protein sequence ID" value="AT4G02840.2"/>
    <property type="gene ID" value="AT4G02840"/>
</dbReference>
<dbReference type="KEGG" id="ath:AT4G02840"/>
<dbReference type="Araport" id="AT4G02840"/>
<dbReference type="TAIR" id="AT4G02840">
    <property type="gene designation" value="SMD1B"/>
</dbReference>
<dbReference type="eggNOG" id="KOG3428">
    <property type="taxonomic scope" value="Eukaryota"/>
</dbReference>
<dbReference type="HOGENOM" id="CLU_123956_3_0_1"/>
<dbReference type="InParanoid" id="Q9SY09"/>
<dbReference type="OMA" id="TFLMKLT"/>
<dbReference type="OrthoDB" id="1109251at2759"/>
<dbReference type="PhylomeDB" id="Q9SY09"/>
<dbReference type="CD-CODE" id="4299E36E">
    <property type="entry name" value="Nucleolus"/>
</dbReference>
<dbReference type="PRO" id="PR:Q9SY09"/>
<dbReference type="Proteomes" id="UP000006548">
    <property type="component" value="Chromosome 4"/>
</dbReference>
<dbReference type="ExpressionAtlas" id="Q9SY09">
    <property type="expression patterns" value="baseline and differential"/>
</dbReference>
<dbReference type="GO" id="GO:0016607">
    <property type="term" value="C:nuclear speck"/>
    <property type="evidence" value="ECO:0000314"/>
    <property type="project" value="UniProtKB"/>
</dbReference>
<dbReference type="GO" id="GO:0005730">
    <property type="term" value="C:nucleolus"/>
    <property type="evidence" value="ECO:0000314"/>
    <property type="project" value="UniProtKB"/>
</dbReference>
<dbReference type="GO" id="GO:0000325">
    <property type="term" value="C:plant-type vacuole"/>
    <property type="evidence" value="ECO:0007005"/>
    <property type="project" value="TAIR"/>
</dbReference>
<dbReference type="GO" id="GO:1990904">
    <property type="term" value="C:ribonucleoprotein complex"/>
    <property type="evidence" value="ECO:0007669"/>
    <property type="project" value="UniProtKB-KW"/>
</dbReference>
<dbReference type="GO" id="GO:0003729">
    <property type="term" value="F:mRNA binding"/>
    <property type="evidence" value="ECO:0000314"/>
    <property type="project" value="UniProtKB"/>
</dbReference>
<dbReference type="GO" id="GO:0043484">
    <property type="term" value="P:regulation of RNA splicing"/>
    <property type="evidence" value="ECO:0000315"/>
    <property type="project" value="UniProtKB"/>
</dbReference>
<dbReference type="GO" id="GO:0035194">
    <property type="term" value="P:regulatory ncRNA-mediated post-transcriptional gene silencing"/>
    <property type="evidence" value="ECO:0000315"/>
    <property type="project" value="UniProtKB"/>
</dbReference>
<dbReference type="GO" id="GO:0008380">
    <property type="term" value="P:RNA splicing"/>
    <property type="evidence" value="ECO:0000315"/>
    <property type="project" value="TAIR"/>
</dbReference>
<dbReference type="GO" id="GO:0000387">
    <property type="term" value="P:spliceosomal snRNP assembly"/>
    <property type="evidence" value="ECO:0007669"/>
    <property type="project" value="InterPro"/>
</dbReference>
<dbReference type="CDD" id="cd01724">
    <property type="entry name" value="Sm_D1"/>
    <property type="match status" value="1"/>
</dbReference>
<dbReference type="FunFam" id="2.30.30.100:FF:000008">
    <property type="entry name" value="Small nuclear ribonucleoprotein Sm D1"/>
    <property type="match status" value="1"/>
</dbReference>
<dbReference type="Gene3D" id="2.30.30.100">
    <property type="match status" value="2"/>
</dbReference>
<dbReference type="InterPro" id="IPR027141">
    <property type="entry name" value="LSm4/Sm_D1/D3"/>
</dbReference>
<dbReference type="InterPro" id="IPR010920">
    <property type="entry name" value="LSM_dom_sf"/>
</dbReference>
<dbReference type="InterPro" id="IPR047575">
    <property type="entry name" value="Sm"/>
</dbReference>
<dbReference type="InterPro" id="IPR034102">
    <property type="entry name" value="Sm_D1"/>
</dbReference>
<dbReference type="InterPro" id="IPR001163">
    <property type="entry name" value="Sm_dom_euk/arc"/>
</dbReference>
<dbReference type="PANTHER" id="PTHR23338">
    <property type="entry name" value="SMALL NUCLEAR RIBONUCLEOPROTEIN SM"/>
    <property type="match status" value="1"/>
</dbReference>
<dbReference type="Pfam" id="PF01423">
    <property type="entry name" value="LSM"/>
    <property type="match status" value="1"/>
</dbReference>
<dbReference type="SMART" id="SM00651">
    <property type="entry name" value="Sm"/>
    <property type="match status" value="1"/>
</dbReference>
<dbReference type="SUPFAM" id="SSF50182">
    <property type="entry name" value="Sm-like ribonucleoproteins"/>
    <property type="match status" value="1"/>
</dbReference>
<dbReference type="PROSITE" id="PS52002">
    <property type="entry name" value="SM"/>
    <property type="match status" value="1"/>
</dbReference>
<reference key="1">
    <citation type="journal article" date="1999" name="Nature">
        <title>Sequence and analysis of chromosome 4 of the plant Arabidopsis thaliana.</title>
        <authorList>
            <person name="Mayer K.F.X."/>
            <person name="Schueller C."/>
            <person name="Wambutt R."/>
            <person name="Murphy G."/>
            <person name="Volckaert G."/>
            <person name="Pohl T."/>
            <person name="Duesterhoeft A."/>
            <person name="Stiekema W."/>
            <person name="Entian K.-D."/>
            <person name="Terryn N."/>
            <person name="Harris B."/>
            <person name="Ansorge W."/>
            <person name="Brandt P."/>
            <person name="Grivell L.A."/>
            <person name="Rieger M."/>
            <person name="Weichselgartner M."/>
            <person name="de Simone V."/>
            <person name="Obermaier B."/>
            <person name="Mache R."/>
            <person name="Mueller M."/>
            <person name="Kreis M."/>
            <person name="Delseny M."/>
            <person name="Puigdomenech P."/>
            <person name="Watson M."/>
            <person name="Schmidtheini T."/>
            <person name="Reichert B."/>
            <person name="Portetelle D."/>
            <person name="Perez-Alonso M."/>
            <person name="Boutry M."/>
            <person name="Bancroft I."/>
            <person name="Vos P."/>
            <person name="Hoheisel J."/>
            <person name="Zimmermann W."/>
            <person name="Wedler H."/>
            <person name="Ridley P."/>
            <person name="Langham S.-A."/>
            <person name="McCullagh B."/>
            <person name="Bilham L."/>
            <person name="Robben J."/>
            <person name="van der Schueren J."/>
            <person name="Grymonprez B."/>
            <person name="Chuang Y.-J."/>
            <person name="Vandenbussche F."/>
            <person name="Braeken M."/>
            <person name="Weltjens I."/>
            <person name="Voet M."/>
            <person name="Bastiaens I."/>
            <person name="Aert R."/>
            <person name="Defoor E."/>
            <person name="Weitzenegger T."/>
            <person name="Bothe G."/>
            <person name="Ramsperger U."/>
            <person name="Hilbert H."/>
            <person name="Braun M."/>
            <person name="Holzer E."/>
            <person name="Brandt A."/>
            <person name="Peters S."/>
            <person name="van Staveren M."/>
            <person name="Dirkse W."/>
            <person name="Mooijman P."/>
            <person name="Klein Lankhorst R."/>
            <person name="Rose M."/>
            <person name="Hauf J."/>
            <person name="Koetter P."/>
            <person name="Berneiser S."/>
            <person name="Hempel S."/>
            <person name="Feldpausch M."/>
            <person name="Lamberth S."/>
            <person name="Van den Daele H."/>
            <person name="De Keyser A."/>
            <person name="Buysshaert C."/>
            <person name="Gielen J."/>
            <person name="Villarroel R."/>
            <person name="De Clercq R."/>
            <person name="van Montagu M."/>
            <person name="Rogers J."/>
            <person name="Cronin A."/>
            <person name="Quail M.A."/>
            <person name="Bray-Allen S."/>
            <person name="Clark L."/>
            <person name="Doggett J."/>
            <person name="Hall S."/>
            <person name="Kay M."/>
            <person name="Lennard N."/>
            <person name="McLay K."/>
            <person name="Mayes R."/>
            <person name="Pettett A."/>
            <person name="Rajandream M.A."/>
            <person name="Lyne M."/>
            <person name="Benes V."/>
            <person name="Rechmann S."/>
            <person name="Borkova D."/>
            <person name="Bloecker H."/>
            <person name="Scharfe M."/>
            <person name="Grimm M."/>
            <person name="Loehnert T.-H."/>
            <person name="Dose S."/>
            <person name="de Haan M."/>
            <person name="Maarse A.C."/>
            <person name="Schaefer M."/>
            <person name="Mueller-Auer S."/>
            <person name="Gabel C."/>
            <person name="Fuchs M."/>
            <person name="Fartmann B."/>
            <person name="Granderath K."/>
            <person name="Dauner D."/>
            <person name="Herzl A."/>
            <person name="Neumann S."/>
            <person name="Argiriou A."/>
            <person name="Vitale D."/>
            <person name="Liguori R."/>
            <person name="Piravandi E."/>
            <person name="Massenet O."/>
            <person name="Quigley F."/>
            <person name="Clabauld G."/>
            <person name="Muendlein A."/>
            <person name="Felber R."/>
            <person name="Schnabl S."/>
            <person name="Hiller R."/>
            <person name="Schmidt W."/>
            <person name="Lecharny A."/>
            <person name="Aubourg S."/>
            <person name="Chefdor F."/>
            <person name="Cooke R."/>
            <person name="Berger C."/>
            <person name="Monfort A."/>
            <person name="Casacuberta E."/>
            <person name="Gibbons T."/>
            <person name="Weber N."/>
            <person name="Vandenbol M."/>
            <person name="Bargues M."/>
            <person name="Terol J."/>
            <person name="Torres A."/>
            <person name="Perez-Perez A."/>
            <person name="Purnelle B."/>
            <person name="Bent E."/>
            <person name="Johnson S."/>
            <person name="Tacon D."/>
            <person name="Jesse T."/>
            <person name="Heijnen L."/>
            <person name="Schwarz S."/>
            <person name="Scholler P."/>
            <person name="Heber S."/>
            <person name="Francs P."/>
            <person name="Bielke C."/>
            <person name="Frishman D."/>
            <person name="Haase D."/>
            <person name="Lemcke K."/>
            <person name="Mewes H.-W."/>
            <person name="Stocker S."/>
            <person name="Zaccaria P."/>
            <person name="Bevan M."/>
            <person name="Wilson R.K."/>
            <person name="de la Bastide M."/>
            <person name="Habermann K."/>
            <person name="Parnell L."/>
            <person name="Dedhia N."/>
            <person name="Gnoj L."/>
            <person name="Schutz K."/>
            <person name="Huang E."/>
            <person name="Spiegel L."/>
            <person name="Sekhon M."/>
            <person name="Murray J."/>
            <person name="Sheet P."/>
            <person name="Cordes M."/>
            <person name="Abu-Threideh J."/>
            <person name="Stoneking T."/>
            <person name="Kalicki J."/>
            <person name="Graves T."/>
            <person name="Harmon G."/>
            <person name="Edwards J."/>
            <person name="Latreille P."/>
            <person name="Courtney L."/>
            <person name="Cloud J."/>
            <person name="Abbott A."/>
            <person name="Scott K."/>
            <person name="Johnson D."/>
            <person name="Minx P."/>
            <person name="Bentley D."/>
            <person name="Fulton B."/>
            <person name="Miller N."/>
            <person name="Greco T."/>
            <person name="Kemp K."/>
            <person name="Kramer J."/>
            <person name="Fulton L."/>
            <person name="Mardis E."/>
            <person name="Dante M."/>
            <person name="Pepin K."/>
            <person name="Hillier L.W."/>
            <person name="Nelson J."/>
            <person name="Spieth J."/>
            <person name="Ryan E."/>
            <person name="Andrews S."/>
            <person name="Geisel C."/>
            <person name="Layman D."/>
            <person name="Du H."/>
            <person name="Ali J."/>
            <person name="Berghoff A."/>
            <person name="Jones K."/>
            <person name="Drone K."/>
            <person name="Cotton M."/>
            <person name="Joshu C."/>
            <person name="Antonoiu B."/>
            <person name="Zidanic M."/>
            <person name="Strong C."/>
            <person name="Sun H."/>
            <person name="Lamar B."/>
            <person name="Yordan C."/>
            <person name="Ma P."/>
            <person name="Zhong J."/>
            <person name="Preston R."/>
            <person name="Vil D."/>
            <person name="Shekher M."/>
            <person name="Matero A."/>
            <person name="Shah R."/>
            <person name="Swaby I.K."/>
            <person name="O'Shaughnessy A."/>
            <person name="Rodriguez M."/>
            <person name="Hoffman J."/>
            <person name="Till S."/>
            <person name="Granat S."/>
            <person name="Shohdy N."/>
            <person name="Hasegawa A."/>
            <person name="Hameed A."/>
            <person name="Lodhi M."/>
            <person name="Johnson A."/>
            <person name="Chen E."/>
            <person name="Marra M.A."/>
            <person name="Martienssen R."/>
            <person name="McCombie W.R."/>
        </authorList>
    </citation>
    <scope>NUCLEOTIDE SEQUENCE [LARGE SCALE GENOMIC DNA]</scope>
    <source>
        <strain>cv. Columbia</strain>
    </source>
</reference>
<reference key="2">
    <citation type="journal article" date="2017" name="Plant J.">
        <title>Araport11: a complete reannotation of the Arabidopsis thaliana reference genome.</title>
        <authorList>
            <person name="Cheng C.Y."/>
            <person name="Krishnakumar V."/>
            <person name="Chan A.P."/>
            <person name="Thibaud-Nissen F."/>
            <person name="Schobel S."/>
            <person name="Town C.D."/>
        </authorList>
    </citation>
    <scope>GENOME REANNOTATION</scope>
    <source>
        <strain>cv. Columbia</strain>
    </source>
</reference>
<reference key="3">
    <citation type="journal article" date="2002" name="Science">
        <title>Functional annotation of a full-length Arabidopsis cDNA collection.</title>
        <authorList>
            <person name="Seki M."/>
            <person name="Narusaka M."/>
            <person name="Kamiya A."/>
            <person name="Ishida J."/>
            <person name="Satou M."/>
            <person name="Sakurai T."/>
            <person name="Nakajima M."/>
            <person name="Enju A."/>
            <person name="Akiyama K."/>
            <person name="Oono Y."/>
            <person name="Muramatsu M."/>
            <person name="Hayashizaki Y."/>
            <person name="Kawai J."/>
            <person name="Carninci P."/>
            <person name="Itoh M."/>
            <person name="Ishii Y."/>
            <person name="Arakawa T."/>
            <person name="Shibata K."/>
            <person name="Shinagawa A."/>
            <person name="Shinozaki K."/>
        </authorList>
    </citation>
    <scope>NUCLEOTIDE SEQUENCE [LARGE SCALE MRNA] (ISOFORM 1)</scope>
    <source>
        <strain>cv. Columbia</strain>
    </source>
</reference>
<reference key="4">
    <citation type="submission" date="2002-03" db="EMBL/GenBank/DDBJ databases">
        <title>Full-length cDNA from Arabidopsis thaliana.</title>
        <authorList>
            <person name="Brover V.V."/>
            <person name="Troukhan M.E."/>
            <person name="Alexandrov N.A."/>
            <person name="Lu Y.-P."/>
            <person name="Flavell R.B."/>
            <person name="Feldmann K.A."/>
        </authorList>
    </citation>
    <scope>NUCLEOTIDE SEQUENCE [LARGE SCALE MRNA] (ISOFORM 1)</scope>
</reference>
<reference key="5">
    <citation type="submission" date="2006-09" db="EMBL/GenBank/DDBJ databases">
        <title>Arabidopsis ORF Clones.</title>
        <authorList>
            <person name="Bautista V.R."/>
            <person name="Kim C.J."/>
            <person name="Chen H."/>
            <person name="Quinitio C."/>
            <person name="Ecker J.R."/>
        </authorList>
    </citation>
    <scope>NUCLEOTIDE SEQUENCE [LARGE SCALE MRNA] (ISOFORM 1)</scope>
    <source>
        <strain>cv. Columbia</strain>
    </source>
</reference>
<reference key="6">
    <citation type="journal article" date="2004" name="Genome Biol.">
        <title>The ASRG database: identification and survey of Arabidopsis thaliana genes involved in pre-mRNA splicing.</title>
        <authorList>
            <person name="Wang B.B."/>
            <person name="Brendel V."/>
        </authorList>
    </citation>
    <scope>GENE FAMILY</scope>
    <scope>NOMENCLATURE</scope>
</reference>
<reference key="7">
    <citation type="journal article" date="2016" name="Plant Cell">
        <title>The nuclear ribonucleoprotein SmD1 interplays with splicing, RNA quality control, and posttranscriptional gene silencing in Arabidopsis.</title>
        <authorList>
            <person name="Elvira-Matelot E."/>
            <person name="Bardou F."/>
            <person name="Ariel F."/>
            <person name="Jauvion V."/>
            <person name="Bouteiller N."/>
            <person name="Le Masson I."/>
            <person name="Cao J."/>
            <person name="Crespi M.D."/>
            <person name="Vaucheret H."/>
        </authorList>
    </citation>
    <scope>FUNCTION</scope>
    <scope>DISRUPTION PHENOTYPE</scope>
    <scope>SUBCELLULAR LOCATION</scope>
</reference>
<proteinExistence type="inferred from homology"/>
<sequence length="116" mass="12750">MKLVRFLMKLNNETVSIELKNGTIVHGTITGVDVSMNTHLKAVKLTLKGKNPVTLDHLSVRGNNIRYYILPDSLNLETLLVEDTPRIKPKKPTAGKIPAGRGRGRGRGRGRGRGGR</sequence>
<keyword id="KW-0025">Alternative splicing</keyword>
<keyword id="KW-0539">Nucleus</keyword>
<keyword id="KW-1185">Reference proteome</keyword>
<keyword id="KW-0677">Repeat</keyword>
<keyword id="KW-0687">Ribonucleoprotein</keyword>
<organism>
    <name type="scientific">Arabidopsis thaliana</name>
    <name type="common">Mouse-ear cress</name>
    <dbReference type="NCBI Taxonomy" id="3702"/>
    <lineage>
        <taxon>Eukaryota</taxon>
        <taxon>Viridiplantae</taxon>
        <taxon>Streptophyta</taxon>
        <taxon>Embryophyta</taxon>
        <taxon>Tracheophyta</taxon>
        <taxon>Spermatophyta</taxon>
        <taxon>Magnoliopsida</taxon>
        <taxon>eudicotyledons</taxon>
        <taxon>Gunneridae</taxon>
        <taxon>Pentapetalae</taxon>
        <taxon>rosids</taxon>
        <taxon>malvids</taxon>
        <taxon>Brassicales</taxon>
        <taxon>Brassicaceae</taxon>
        <taxon>Camelineae</taxon>
        <taxon>Arabidopsis</taxon>
    </lineage>
</organism>
<protein>
    <recommendedName>
        <fullName evidence="4">Small nuclear ribonucleoprotein SmD1b</fullName>
        <shortName evidence="4">AtSmD1-b</shortName>
    </recommendedName>
</protein>
<evidence type="ECO:0000255" key="1">
    <source>
        <dbReference type="PROSITE-ProRule" id="PRU01346"/>
    </source>
</evidence>
<evidence type="ECO:0000256" key="2">
    <source>
        <dbReference type="SAM" id="MobiDB-lite"/>
    </source>
</evidence>
<evidence type="ECO:0000269" key="3">
    <source>
    </source>
</evidence>
<evidence type="ECO:0000303" key="4">
    <source>
    </source>
</evidence>
<evidence type="ECO:0000305" key="5"/>
<evidence type="ECO:0000305" key="6">
    <source>
    </source>
</evidence>
<evidence type="ECO:0000312" key="7">
    <source>
        <dbReference type="Araport" id="AT4G02840"/>
    </source>
</evidence>
<evidence type="ECO:0000312" key="8">
    <source>
        <dbReference type="EMBL" id="AAD15345.1"/>
    </source>
</evidence>
<gene>
    <name evidence="4" type="primary">SMD1B</name>
    <name evidence="7" type="ordered locus">At4g02840</name>
    <name evidence="8" type="ORF">T5J8.16</name>
</gene>